<name>RL2_BURVG</name>
<organism>
    <name type="scientific">Burkholderia vietnamiensis (strain G4 / LMG 22486)</name>
    <name type="common">Burkholderia cepacia (strain R1808)</name>
    <dbReference type="NCBI Taxonomy" id="269482"/>
    <lineage>
        <taxon>Bacteria</taxon>
        <taxon>Pseudomonadati</taxon>
        <taxon>Pseudomonadota</taxon>
        <taxon>Betaproteobacteria</taxon>
        <taxon>Burkholderiales</taxon>
        <taxon>Burkholderiaceae</taxon>
        <taxon>Burkholderia</taxon>
        <taxon>Burkholderia cepacia complex</taxon>
    </lineage>
</organism>
<feature type="chain" id="PRO_0000309888" description="Large ribosomal subunit protein uL2">
    <location>
        <begin position="1"/>
        <end position="275"/>
    </location>
</feature>
<feature type="region of interest" description="Disordered" evidence="2">
    <location>
        <begin position="36"/>
        <end position="59"/>
    </location>
</feature>
<feature type="region of interest" description="Disordered" evidence="2">
    <location>
        <begin position="224"/>
        <end position="275"/>
    </location>
</feature>
<feature type="compositionally biased region" description="Polar residues" evidence="2">
    <location>
        <begin position="36"/>
        <end position="49"/>
    </location>
</feature>
<feature type="compositionally biased region" description="Basic residues" evidence="2">
    <location>
        <begin position="50"/>
        <end position="59"/>
    </location>
</feature>
<keyword id="KW-0687">Ribonucleoprotein</keyword>
<keyword id="KW-0689">Ribosomal protein</keyword>
<keyword id="KW-0694">RNA-binding</keyword>
<keyword id="KW-0699">rRNA-binding</keyword>
<evidence type="ECO:0000255" key="1">
    <source>
        <dbReference type="HAMAP-Rule" id="MF_01320"/>
    </source>
</evidence>
<evidence type="ECO:0000256" key="2">
    <source>
        <dbReference type="SAM" id="MobiDB-lite"/>
    </source>
</evidence>
<evidence type="ECO:0000305" key="3"/>
<sequence>MAIVKVKPTSPGRRAMVKVVNKDLHQGKPHAALLDTQSSTAGRNNNGRITTRHKGGGHKHHYRIVDFRRTKDGIPAKVERLEYDPNRSANIALVLYADGERRYIIAPKGLTVGQQLMSGSEAPIRAGNTLPIRNIPVGTTIHCIEMLPGKGAQMARSAGTSAMLLAREGVYAQVRLRSGEIRRVHIECRATIGEVGNEEHSLRQIGKAGANRWRGIRPTVRGVAMNPVDHPHGGGEGKTAAGRDPVSPWGTPTKGYRTRSNKRTTTMIVQRRHKR</sequence>
<dbReference type="EMBL" id="CP000614">
    <property type="protein sequence ID" value="ABO53346.1"/>
    <property type="molecule type" value="Genomic_DNA"/>
</dbReference>
<dbReference type="SMR" id="A4JAP3"/>
<dbReference type="KEGG" id="bvi:Bcep1808_0333"/>
<dbReference type="eggNOG" id="COG0090">
    <property type="taxonomic scope" value="Bacteria"/>
</dbReference>
<dbReference type="HOGENOM" id="CLU_036235_2_1_4"/>
<dbReference type="Proteomes" id="UP000002287">
    <property type="component" value="Chromosome 1"/>
</dbReference>
<dbReference type="GO" id="GO:0015934">
    <property type="term" value="C:large ribosomal subunit"/>
    <property type="evidence" value="ECO:0007669"/>
    <property type="project" value="InterPro"/>
</dbReference>
<dbReference type="GO" id="GO:0019843">
    <property type="term" value="F:rRNA binding"/>
    <property type="evidence" value="ECO:0007669"/>
    <property type="project" value="UniProtKB-UniRule"/>
</dbReference>
<dbReference type="GO" id="GO:0003735">
    <property type="term" value="F:structural constituent of ribosome"/>
    <property type="evidence" value="ECO:0007669"/>
    <property type="project" value="InterPro"/>
</dbReference>
<dbReference type="GO" id="GO:0016740">
    <property type="term" value="F:transferase activity"/>
    <property type="evidence" value="ECO:0007669"/>
    <property type="project" value="InterPro"/>
</dbReference>
<dbReference type="GO" id="GO:0002181">
    <property type="term" value="P:cytoplasmic translation"/>
    <property type="evidence" value="ECO:0007669"/>
    <property type="project" value="TreeGrafter"/>
</dbReference>
<dbReference type="FunFam" id="2.30.30.30:FF:000001">
    <property type="entry name" value="50S ribosomal protein L2"/>
    <property type="match status" value="1"/>
</dbReference>
<dbReference type="FunFam" id="2.40.50.140:FF:000003">
    <property type="entry name" value="50S ribosomal protein L2"/>
    <property type="match status" value="1"/>
</dbReference>
<dbReference type="FunFam" id="4.10.950.10:FF:000001">
    <property type="entry name" value="50S ribosomal protein L2"/>
    <property type="match status" value="1"/>
</dbReference>
<dbReference type="Gene3D" id="2.30.30.30">
    <property type="match status" value="1"/>
</dbReference>
<dbReference type="Gene3D" id="2.40.50.140">
    <property type="entry name" value="Nucleic acid-binding proteins"/>
    <property type="match status" value="1"/>
</dbReference>
<dbReference type="Gene3D" id="4.10.950.10">
    <property type="entry name" value="Ribosomal protein L2, domain 3"/>
    <property type="match status" value="1"/>
</dbReference>
<dbReference type="HAMAP" id="MF_01320_B">
    <property type="entry name" value="Ribosomal_uL2_B"/>
    <property type="match status" value="1"/>
</dbReference>
<dbReference type="InterPro" id="IPR012340">
    <property type="entry name" value="NA-bd_OB-fold"/>
</dbReference>
<dbReference type="InterPro" id="IPR014722">
    <property type="entry name" value="Rib_uL2_dom2"/>
</dbReference>
<dbReference type="InterPro" id="IPR002171">
    <property type="entry name" value="Ribosomal_uL2"/>
</dbReference>
<dbReference type="InterPro" id="IPR005880">
    <property type="entry name" value="Ribosomal_uL2_bac/org-type"/>
</dbReference>
<dbReference type="InterPro" id="IPR022669">
    <property type="entry name" value="Ribosomal_uL2_C"/>
</dbReference>
<dbReference type="InterPro" id="IPR022671">
    <property type="entry name" value="Ribosomal_uL2_CS"/>
</dbReference>
<dbReference type="InterPro" id="IPR014726">
    <property type="entry name" value="Ribosomal_uL2_dom3"/>
</dbReference>
<dbReference type="InterPro" id="IPR022666">
    <property type="entry name" value="Ribosomal_uL2_RNA-bd_dom"/>
</dbReference>
<dbReference type="InterPro" id="IPR008991">
    <property type="entry name" value="Translation_prot_SH3-like_sf"/>
</dbReference>
<dbReference type="NCBIfam" id="TIGR01171">
    <property type="entry name" value="rplB_bact"/>
    <property type="match status" value="1"/>
</dbReference>
<dbReference type="PANTHER" id="PTHR13691:SF5">
    <property type="entry name" value="LARGE RIBOSOMAL SUBUNIT PROTEIN UL2M"/>
    <property type="match status" value="1"/>
</dbReference>
<dbReference type="PANTHER" id="PTHR13691">
    <property type="entry name" value="RIBOSOMAL PROTEIN L2"/>
    <property type="match status" value="1"/>
</dbReference>
<dbReference type="Pfam" id="PF00181">
    <property type="entry name" value="Ribosomal_L2"/>
    <property type="match status" value="1"/>
</dbReference>
<dbReference type="Pfam" id="PF03947">
    <property type="entry name" value="Ribosomal_L2_C"/>
    <property type="match status" value="1"/>
</dbReference>
<dbReference type="PIRSF" id="PIRSF002158">
    <property type="entry name" value="Ribosomal_L2"/>
    <property type="match status" value="1"/>
</dbReference>
<dbReference type="SMART" id="SM01383">
    <property type="entry name" value="Ribosomal_L2"/>
    <property type="match status" value="1"/>
</dbReference>
<dbReference type="SMART" id="SM01382">
    <property type="entry name" value="Ribosomal_L2_C"/>
    <property type="match status" value="1"/>
</dbReference>
<dbReference type="SUPFAM" id="SSF50249">
    <property type="entry name" value="Nucleic acid-binding proteins"/>
    <property type="match status" value="1"/>
</dbReference>
<dbReference type="SUPFAM" id="SSF50104">
    <property type="entry name" value="Translation proteins SH3-like domain"/>
    <property type="match status" value="1"/>
</dbReference>
<dbReference type="PROSITE" id="PS00467">
    <property type="entry name" value="RIBOSOMAL_L2"/>
    <property type="match status" value="1"/>
</dbReference>
<protein>
    <recommendedName>
        <fullName evidence="1">Large ribosomal subunit protein uL2</fullName>
    </recommendedName>
    <alternativeName>
        <fullName evidence="3">50S ribosomal protein L2</fullName>
    </alternativeName>
</protein>
<gene>
    <name evidence="1" type="primary">rplB</name>
    <name type="ordered locus">Bcep1808_0333</name>
</gene>
<comment type="function">
    <text evidence="1">One of the primary rRNA binding proteins. Required for association of the 30S and 50S subunits to form the 70S ribosome, for tRNA binding and peptide bond formation. It has been suggested to have peptidyltransferase activity; this is somewhat controversial. Makes several contacts with the 16S rRNA in the 70S ribosome.</text>
</comment>
<comment type="subunit">
    <text evidence="1">Part of the 50S ribosomal subunit. Forms a bridge to the 30S subunit in the 70S ribosome.</text>
</comment>
<comment type="similarity">
    <text evidence="1">Belongs to the universal ribosomal protein uL2 family.</text>
</comment>
<accession>A4JAP3</accession>
<reference key="1">
    <citation type="submission" date="2007-03" db="EMBL/GenBank/DDBJ databases">
        <title>Complete sequence of chromosome 1 of Burkholderia vietnamiensis G4.</title>
        <authorList>
            <consortium name="US DOE Joint Genome Institute"/>
            <person name="Copeland A."/>
            <person name="Lucas S."/>
            <person name="Lapidus A."/>
            <person name="Barry K."/>
            <person name="Detter J.C."/>
            <person name="Glavina del Rio T."/>
            <person name="Hammon N."/>
            <person name="Israni S."/>
            <person name="Dalin E."/>
            <person name="Tice H."/>
            <person name="Pitluck S."/>
            <person name="Chain P."/>
            <person name="Malfatti S."/>
            <person name="Shin M."/>
            <person name="Vergez L."/>
            <person name="Schmutz J."/>
            <person name="Larimer F."/>
            <person name="Land M."/>
            <person name="Hauser L."/>
            <person name="Kyrpides N."/>
            <person name="Tiedje J."/>
            <person name="Richardson P."/>
        </authorList>
    </citation>
    <scope>NUCLEOTIDE SEQUENCE [LARGE SCALE GENOMIC DNA]</scope>
    <source>
        <strain>G4 / LMG 22486</strain>
    </source>
</reference>
<proteinExistence type="inferred from homology"/>